<evidence type="ECO:0000255" key="1">
    <source>
        <dbReference type="HAMAP-Rule" id="MF_01334"/>
    </source>
</evidence>
<evidence type="ECO:0000256" key="2">
    <source>
        <dbReference type="SAM" id="MobiDB-lite"/>
    </source>
</evidence>
<evidence type="ECO:0000305" key="3"/>
<dbReference type="EMBL" id="CP001196">
    <property type="protein sequence ID" value="ACI94294.1"/>
    <property type="molecule type" value="Genomic_DNA"/>
</dbReference>
<dbReference type="EMBL" id="CP002826">
    <property type="protein sequence ID" value="AEI05641.1"/>
    <property type="molecule type" value="Genomic_DNA"/>
</dbReference>
<dbReference type="RefSeq" id="WP_012564320.1">
    <property type="nucleotide sequence ID" value="NC_015684.1"/>
</dbReference>
<dbReference type="SMR" id="B6JIP4"/>
<dbReference type="STRING" id="504832.OCA5_c09190"/>
<dbReference type="KEGG" id="oca:OCAR_7190"/>
<dbReference type="KEGG" id="ocg:OCA5_c09190"/>
<dbReference type="PATRIC" id="fig|504832.7.peg.972"/>
<dbReference type="eggNOG" id="COG1825">
    <property type="taxonomic scope" value="Bacteria"/>
</dbReference>
<dbReference type="HOGENOM" id="CLU_075939_0_0_5"/>
<dbReference type="OrthoDB" id="9806411at2"/>
<dbReference type="Proteomes" id="UP000007730">
    <property type="component" value="Chromosome"/>
</dbReference>
<dbReference type="GO" id="GO:0022625">
    <property type="term" value="C:cytosolic large ribosomal subunit"/>
    <property type="evidence" value="ECO:0007669"/>
    <property type="project" value="TreeGrafter"/>
</dbReference>
<dbReference type="GO" id="GO:0008097">
    <property type="term" value="F:5S rRNA binding"/>
    <property type="evidence" value="ECO:0007669"/>
    <property type="project" value="InterPro"/>
</dbReference>
<dbReference type="GO" id="GO:0003735">
    <property type="term" value="F:structural constituent of ribosome"/>
    <property type="evidence" value="ECO:0007669"/>
    <property type="project" value="InterPro"/>
</dbReference>
<dbReference type="GO" id="GO:0006412">
    <property type="term" value="P:translation"/>
    <property type="evidence" value="ECO:0007669"/>
    <property type="project" value="UniProtKB-UniRule"/>
</dbReference>
<dbReference type="CDD" id="cd00495">
    <property type="entry name" value="Ribosomal_L25_TL5_CTC"/>
    <property type="match status" value="1"/>
</dbReference>
<dbReference type="Gene3D" id="2.170.120.20">
    <property type="entry name" value="Ribosomal protein L25, beta domain"/>
    <property type="match status" value="1"/>
</dbReference>
<dbReference type="Gene3D" id="2.40.240.10">
    <property type="entry name" value="Ribosomal Protein L25, Chain P"/>
    <property type="match status" value="1"/>
</dbReference>
<dbReference type="HAMAP" id="MF_01334">
    <property type="entry name" value="Ribosomal_bL25_CTC"/>
    <property type="match status" value="1"/>
</dbReference>
<dbReference type="InterPro" id="IPR020056">
    <property type="entry name" value="Rbsml_bL25/Gln-tRNA_synth_N"/>
</dbReference>
<dbReference type="InterPro" id="IPR011035">
    <property type="entry name" value="Ribosomal_bL25/Gln-tRNA_synth"/>
</dbReference>
<dbReference type="InterPro" id="IPR020057">
    <property type="entry name" value="Ribosomal_bL25_b-dom"/>
</dbReference>
<dbReference type="InterPro" id="IPR037121">
    <property type="entry name" value="Ribosomal_bL25_C"/>
</dbReference>
<dbReference type="InterPro" id="IPR001021">
    <property type="entry name" value="Ribosomal_bL25_long"/>
</dbReference>
<dbReference type="InterPro" id="IPR029751">
    <property type="entry name" value="Ribosomal_L25_dom"/>
</dbReference>
<dbReference type="InterPro" id="IPR020930">
    <property type="entry name" value="Ribosomal_uL5_bac-type"/>
</dbReference>
<dbReference type="NCBIfam" id="TIGR00731">
    <property type="entry name" value="bL25_bact_ctc"/>
    <property type="match status" value="1"/>
</dbReference>
<dbReference type="NCBIfam" id="NF004128">
    <property type="entry name" value="PRK05618.1-2"/>
    <property type="match status" value="1"/>
</dbReference>
<dbReference type="PANTHER" id="PTHR33284">
    <property type="entry name" value="RIBOSOMAL PROTEIN L25/GLN-TRNA SYNTHETASE, ANTI-CODON-BINDING DOMAIN-CONTAINING PROTEIN"/>
    <property type="match status" value="1"/>
</dbReference>
<dbReference type="PANTHER" id="PTHR33284:SF1">
    <property type="entry name" value="RIBOSOMAL PROTEIN L25_GLN-TRNA SYNTHETASE, ANTI-CODON-BINDING DOMAIN-CONTAINING PROTEIN"/>
    <property type="match status" value="1"/>
</dbReference>
<dbReference type="Pfam" id="PF01386">
    <property type="entry name" value="Ribosomal_L25p"/>
    <property type="match status" value="1"/>
</dbReference>
<dbReference type="Pfam" id="PF14693">
    <property type="entry name" value="Ribosomal_TL5_C"/>
    <property type="match status" value="1"/>
</dbReference>
<dbReference type="SUPFAM" id="SSF50715">
    <property type="entry name" value="Ribosomal protein L25-like"/>
    <property type="match status" value="1"/>
</dbReference>
<proteinExistence type="inferred from homology"/>
<organism>
    <name type="scientific">Afipia carboxidovorans (strain ATCC 49405 / DSM 1227 / KCTC 32145 / OM5)</name>
    <name type="common">Oligotropha carboxidovorans</name>
    <dbReference type="NCBI Taxonomy" id="504832"/>
    <lineage>
        <taxon>Bacteria</taxon>
        <taxon>Pseudomonadati</taxon>
        <taxon>Pseudomonadota</taxon>
        <taxon>Alphaproteobacteria</taxon>
        <taxon>Hyphomicrobiales</taxon>
        <taxon>Nitrobacteraceae</taxon>
        <taxon>Afipia</taxon>
    </lineage>
</organism>
<name>RL25_AFIC5</name>
<accession>B6JIP4</accession>
<accession>F8C0H0</accession>
<sequence>MATVKELKATARPKAGKGAARAERRAGRVPAVIYGDNKPPVTISLDDKALRQSIFAGHFLTTLFNIDLDGQKYRVIPRDYALDPVKDFPLHVDFLRLGEGATIRVSVPLHVKGAELSPGVKRGGTVNIVNHTVELEAEVDHIPQFIEVDVSKLEINNSVHLNDVALPKGVKPVLREGMTLVTVVPPSGMGEEAKGGADAAAAAAGAAAPAAGAAAPAAGAAKAPAAAAAKAPAAGGDKKK</sequence>
<feature type="chain" id="PRO_1000142539" description="Large ribosomal subunit protein bL25">
    <location>
        <begin position="1"/>
        <end position="240"/>
    </location>
</feature>
<feature type="region of interest" description="Disordered" evidence="2">
    <location>
        <begin position="1"/>
        <end position="23"/>
    </location>
</feature>
<feature type="compositionally biased region" description="Low complexity" evidence="2">
    <location>
        <begin position="10"/>
        <end position="19"/>
    </location>
</feature>
<protein>
    <recommendedName>
        <fullName evidence="1">Large ribosomal subunit protein bL25</fullName>
    </recommendedName>
    <alternativeName>
        <fullName evidence="3">50S ribosomal protein L25</fullName>
    </alternativeName>
    <alternativeName>
        <fullName evidence="1">General stress protein CTC</fullName>
    </alternativeName>
</protein>
<comment type="function">
    <text evidence="1">This is one of the proteins that binds to the 5S RNA in the ribosome where it forms part of the central protuberance.</text>
</comment>
<comment type="subunit">
    <text evidence="1">Part of the 50S ribosomal subunit; part of the 5S rRNA/L5/L18/L25 subcomplex. Contacts the 5S rRNA. Binds to the 5S rRNA independently of L5 and L18.</text>
</comment>
<comment type="similarity">
    <text evidence="1">Belongs to the bacterial ribosomal protein bL25 family. CTC subfamily.</text>
</comment>
<reference key="1">
    <citation type="journal article" date="2008" name="J. Bacteriol.">
        <title>Genome sequence of the chemolithoautotrophic bacterium Oligotropha carboxidovorans OM5T.</title>
        <authorList>
            <person name="Paul D."/>
            <person name="Bridges S."/>
            <person name="Burgess S.C."/>
            <person name="Dandass Y."/>
            <person name="Lawrence M.L."/>
        </authorList>
    </citation>
    <scope>NUCLEOTIDE SEQUENCE [LARGE SCALE GENOMIC DNA]</scope>
    <source>
        <strain>ATCC 49405 / DSM 1227 / KCTC 32145 / OM5</strain>
    </source>
</reference>
<reference key="2">
    <citation type="journal article" date="2011" name="J. Bacteriol.">
        <title>Complete genome sequences of the chemolithoautotrophic Oligotropha carboxidovorans strains OM4 and OM5.</title>
        <authorList>
            <person name="Volland S."/>
            <person name="Rachinger M."/>
            <person name="Strittmatter A."/>
            <person name="Daniel R."/>
            <person name="Gottschalk G."/>
            <person name="Meyer O."/>
        </authorList>
    </citation>
    <scope>NUCLEOTIDE SEQUENCE [LARGE SCALE GENOMIC DNA]</scope>
    <source>
        <strain>ATCC 49405 / DSM 1227 / KCTC 32145 / OM5</strain>
    </source>
</reference>
<keyword id="KW-1185">Reference proteome</keyword>
<keyword id="KW-0687">Ribonucleoprotein</keyword>
<keyword id="KW-0689">Ribosomal protein</keyword>
<keyword id="KW-0694">RNA-binding</keyword>
<keyword id="KW-0699">rRNA-binding</keyword>
<gene>
    <name evidence="1" type="primary">rplY</name>
    <name evidence="1" type="synonym">ctc</name>
    <name type="ordered locus">OCAR_7190</name>
    <name type="ordered locus">OCA5_c09190</name>
</gene>